<feature type="chain" id="PRO_0000064878" description="Bacteriochlorophyll synthase 34 kDa chain">
    <location>
        <begin position="1"/>
        <end position="310"/>
    </location>
</feature>
<feature type="transmembrane region" description="Helical" evidence="1">
    <location>
        <begin position="39"/>
        <end position="59"/>
    </location>
</feature>
<feature type="transmembrane region" description="Helical" evidence="1">
    <location>
        <begin position="67"/>
        <end position="87"/>
    </location>
</feature>
<feature type="transmembrane region" description="Helical" evidence="1">
    <location>
        <begin position="112"/>
        <end position="132"/>
    </location>
</feature>
<feature type="transmembrane region" description="Helical" evidence="1">
    <location>
        <begin position="134"/>
        <end position="154"/>
    </location>
</feature>
<feature type="transmembrane region" description="Helical" evidence="1">
    <location>
        <begin position="166"/>
        <end position="186"/>
    </location>
</feature>
<feature type="transmembrane region" description="Helical" evidence="1">
    <location>
        <begin position="187"/>
        <end position="207"/>
    </location>
</feature>
<feature type="transmembrane region" description="Helical" evidence="1">
    <location>
        <begin position="248"/>
        <end position="268"/>
    </location>
</feature>
<feature type="transmembrane region" description="Helical" evidence="1">
    <location>
        <begin position="287"/>
        <end position="307"/>
    </location>
</feature>
<feature type="region of interest" description="Disordered" evidence="2">
    <location>
        <begin position="1"/>
        <end position="20"/>
    </location>
</feature>
<feature type="compositionally biased region" description="Polar residues" evidence="2">
    <location>
        <begin position="1"/>
        <end position="13"/>
    </location>
</feature>
<reference key="1">
    <citation type="journal article" date="1996" name="J. Bacteriol.">
        <title>Sequence of the bchG gene from Chloroflexus aurantiacus: relationship between chlorophyll synthase and other polyprenyltransferases.</title>
        <authorList>
            <person name="Lopez J.C."/>
            <person name="Ryan S."/>
            <person name="Blankenship R.E."/>
        </authorList>
    </citation>
    <scope>NUCLEOTIDE SEQUENCE [GENOMIC DNA]</scope>
</reference>
<reference key="2">
    <citation type="journal article" date="2011" name="BMC Genomics">
        <title>Complete genome sequence of the filamentous anoxygenic phototrophic bacterium Chloroflexus aurantiacus.</title>
        <authorList>
            <person name="Tang K.H."/>
            <person name="Barry K."/>
            <person name="Chertkov O."/>
            <person name="Dalin E."/>
            <person name="Han C.S."/>
            <person name="Hauser L.J."/>
            <person name="Honchak B.M."/>
            <person name="Karbach L.E."/>
            <person name="Land M.L."/>
            <person name="Lapidus A."/>
            <person name="Larimer F.W."/>
            <person name="Mikhailova N."/>
            <person name="Pitluck S."/>
            <person name="Pierson B.K."/>
            <person name="Blankenship R.E."/>
        </authorList>
    </citation>
    <scope>NUCLEOTIDE SEQUENCE [LARGE SCALE GENOMIC DNA]</scope>
    <source>
        <strain>ATCC 29366 / DSM 635 / J-10-fl</strain>
    </source>
</reference>
<reference key="3">
    <citation type="journal article" date="1991" name="Biochemistry">
        <title>The primary structure of cytochrome c-554 from the green photosynthetic bacterium Chloroflexus aurantiacus.</title>
        <authorList>
            <person name="Dracheva S."/>
            <person name="Williams J.C."/>
            <person name="van Driessche G."/>
            <person name="van Beeumen J.J."/>
            <person name="Blankenship R.E."/>
        </authorList>
    </citation>
    <scope>NUCLEOTIDE SEQUENCE [GENOMIC DNA] OF 1-131</scope>
</reference>
<accession>P33326</accession>
<accession>A9WEY5</accession>
<gene>
    <name type="primary">bchG</name>
    <name type="ordered locus">Caur_2088</name>
</gene>
<name>BCHG_CHLAA</name>
<sequence>MSDMSDQTRLSSPPSLPLHKQPQSRYAWLVRSIQLMKPVTWFAPTWAFMCGAIASGALGWNESIGRLLLGMFMAGPILCGLSQVVNDYADREVDAINEPHRLIPSGQVSLRHVYILTAVLTWIGASIALFLGRQVAFFVALGLVFALAYSLRPIRGKRNGWIGNALVAISYEGLAWMAGHAAFAPLTGESVTIALLYSLGAHGIMTVNDFKSIRGDTIMGIRSIPVQYGKVMAARMVVTTMGVAQIAVIGLLFHWGHPVAATVVAILLAAQSIPNARFIRDPENNEVFFNATAIMLYVWGMLAAAIGLAA</sequence>
<dbReference type="EMBL" id="U43963">
    <property type="protein sequence ID" value="AAB05629.1"/>
    <property type="molecule type" value="Genomic_DNA"/>
</dbReference>
<dbReference type="EMBL" id="CP000909">
    <property type="protein sequence ID" value="ABY35300.1"/>
    <property type="molecule type" value="Genomic_DNA"/>
</dbReference>
<dbReference type="EMBL" id="M77813">
    <property type="protein sequence ID" value="AAA23101.1"/>
    <property type="molecule type" value="Genomic_DNA"/>
</dbReference>
<dbReference type="PIR" id="B39303">
    <property type="entry name" value="B39303"/>
</dbReference>
<dbReference type="RefSeq" id="YP_001635689.1">
    <property type="nucleotide sequence ID" value="NC_010175.1"/>
</dbReference>
<dbReference type="SMR" id="P33326"/>
<dbReference type="STRING" id="324602.Caur_2088"/>
<dbReference type="EnsemblBacteria" id="ABY35300">
    <property type="protein sequence ID" value="ABY35300"/>
    <property type="gene ID" value="Caur_2088"/>
</dbReference>
<dbReference type="KEGG" id="cau:Caur_2088"/>
<dbReference type="PATRIC" id="fig|324602.8.peg.2368"/>
<dbReference type="eggNOG" id="COG0382">
    <property type="taxonomic scope" value="Bacteria"/>
</dbReference>
<dbReference type="HOGENOM" id="CLU_042598_0_0_0"/>
<dbReference type="InParanoid" id="P33326"/>
<dbReference type="UniPathway" id="UPA00671"/>
<dbReference type="Proteomes" id="UP000002008">
    <property type="component" value="Chromosome"/>
</dbReference>
<dbReference type="GO" id="GO:0005886">
    <property type="term" value="C:plasma membrane"/>
    <property type="evidence" value="ECO:0007669"/>
    <property type="project" value="UniProtKB-SubCell"/>
</dbReference>
<dbReference type="GO" id="GO:0016765">
    <property type="term" value="F:transferase activity, transferring alkyl or aryl (other than methyl) groups"/>
    <property type="evidence" value="ECO:0007669"/>
    <property type="project" value="InterPro"/>
</dbReference>
<dbReference type="GO" id="GO:0036070">
    <property type="term" value="P:light-independent bacteriochlorophyll biosynthetic process"/>
    <property type="evidence" value="ECO:0007669"/>
    <property type="project" value="UniProtKB-UniPathway"/>
</dbReference>
<dbReference type="GO" id="GO:0015979">
    <property type="term" value="P:photosynthesis"/>
    <property type="evidence" value="ECO:0007669"/>
    <property type="project" value="UniProtKB-KW"/>
</dbReference>
<dbReference type="CDD" id="cd13958">
    <property type="entry name" value="PT_UbiA_chlorophyll"/>
    <property type="match status" value="1"/>
</dbReference>
<dbReference type="Gene3D" id="1.10.357.140">
    <property type="entry name" value="UbiA prenyltransferase"/>
    <property type="match status" value="1"/>
</dbReference>
<dbReference type="InterPro" id="IPR006372">
    <property type="entry name" value="Chl_synth"/>
</dbReference>
<dbReference type="InterPro" id="IPR050475">
    <property type="entry name" value="Prenyltransferase_related"/>
</dbReference>
<dbReference type="InterPro" id="IPR000537">
    <property type="entry name" value="UbiA_prenyltransferase"/>
</dbReference>
<dbReference type="InterPro" id="IPR044878">
    <property type="entry name" value="UbiA_sf"/>
</dbReference>
<dbReference type="NCBIfam" id="TIGR01476">
    <property type="entry name" value="chlor_syn_BchG"/>
    <property type="match status" value="1"/>
</dbReference>
<dbReference type="NCBIfam" id="NF005742">
    <property type="entry name" value="PRK07566.1"/>
    <property type="match status" value="1"/>
</dbReference>
<dbReference type="PANTHER" id="PTHR42723">
    <property type="entry name" value="CHLOROPHYLL SYNTHASE"/>
    <property type="match status" value="1"/>
</dbReference>
<dbReference type="PANTHER" id="PTHR42723:SF1">
    <property type="entry name" value="CHLOROPHYLL SYNTHASE, CHLOROPLASTIC"/>
    <property type="match status" value="1"/>
</dbReference>
<dbReference type="Pfam" id="PF01040">
    <property type="entry name" value="UbiA"/>
    <property type="match status" value="1"/>
</dbReference>
<protein>
    <recommendedName>
        <fullName>Bacteriochlorophyll synthase 34 kDa chain</fullName>
    </recommendedName>
</protein>
<comment type="function">
    <text>Catalyzes the esterification of bacteriochlorophyllide a by geranylgeraniol-PPi.</text>
</comment>
<comment type="pathway">
    <text>Porphyrin-containing compound metabolism; bacteriochlorophyll biosynthesis (light-independent).</text>
</comment>
<comment type="subcellular location">
    <subcellularLocation>
        <location evidence="3">Cell membrane</location>
        <topology evidence="3">Multi-pass membrane protein</topology>
    </subcellularLocation>
</comment>
<keyword id="KW-0077">Bacteriochlorophyll biosynthesis</keyword>
<keyword id="KW-1003">Cell membrane</keyword>
<keyword id="KW-0149">Chlorophyll biosynthesis</keyword>
<keyword id="KW-0472">Membrane</keyword>
<keyword id="KW-0602">Photosynthesis</keyword>
<keyword id="KW-1185">Reference proteome</keyword>
<keyword id="KW-0812">Transmembrane</keyword>
<keyword id="KW-1133">Transmembrane helix</keyword>
<evidence type="ECO:0000255" key="1"/>
<evidence type="ECO:0000256" key="2">
    <source>
        <dbReference type="SAM" id="MobiDB-lite"/>
    </source>
</evidence>
<evidence type="ECO:0000305" key="3"/>
<proteinExistence type="predicted"/>
<organism>
    <name type="scientific">Chloroflexus aurantiacus (strain ATCC 29366 / DSM 635 / J-10-fl)</name>
    <dbReference type="NCBI Taxonomy" id="324602"/>
    <lineage>
        <taxon>Bacteria</taxon>
        <taxon>Bacillati</taxon>
        <taxon>Chloroflexota</taxon>
        <taxon>Chloroflexia</taxon>
        <taxon>Chloroflexales</taxon>
        <taxon>Chloroflexineae</taxon>
        <taxon>Chloroflexaceae</taxon>
        <taxon>Chloroflexus</taxon>
    </lineage>
</organism>